<reference key="1">
    <citation type="submission" date="2006-02" db="EMBL/GenBank/DDBJ databases">
        <authorList>
            <consortium name="NIH - Mammalian Gene Collection (MGC) project"/>
        </authorList>
    </citation>
    <scope>NUCLEOTIDE SEQUENCE [LARGE SCALE MRNA]</scope>
    <source>
        <strain>Hereford</strain>
        <tissue>Uterus</tissue>
    </source>
</reference>
<comment type="function">
    <text evidence="1 2">Pore-forming subunit of Ca(2+) homeostasis modulator channels. Mediates ATP release from astrocytes and ATP-induced Ca(2+) influx in microglia thus regulating neuronal ATP and Ca(2+) homeostasis, synaptic transmission and neuroinflammatory response. May form intercellular gap junctions. The gating mechanism remains unknown.</text>
</comment>
<comment type="catalytic activity">
    <reaction evidence="2">
        <text>ATP(in) = ATP(out)</text>
        <dbReference type="Rhea" id="RHEA:75687"/>
        <dbReference type="ChEBI" id="CHEBI:30616"/>
    </reaction>
    <physiologicalReaction direction="left-to-right" evidence="1">
        <dbReference type="Rhea" id="RHEA:75688"/>
    </physiologicalReaction>
</comment>
<comment type="subunit">
    <text evidence="2">Homo-undecamer. Two undecameric hemichannels can assemble in a head-to-head manner to form a gap junction.</text>
</comment>
<comment type="subcellular location">
    <subcellularLocation>
        <location evidence="1">Cell membrane</location>
        <topology evidence="3">Multi-pass membrane protein</topology>
    </subcellularLocation>
</comment>
<comment type="similarity">
    <text evidence="4">Belongs to the CALHM family.</text>
</comment>
<proteinExistence type="evidence at transcript level"/>
<keyword id="KW-1003">Cell membrane</keyword>
<keyword id="KW-1015">Disulfide bond</keyword>
<keyword id="KW-0407">Ion channel</keyword>
<keyword id="KW-0406">Ion transport</keyword>
<keyword id="KW-0472">Membrane</keyword>
<keyword id="KW-1185">Reference proteome</keyword>
<keyword id="KW-0812">Transmembrane</keyword>
<keyword id="KW-1133">Transmembrane helix</keyword>
<keyword id="KW-0813">Transport</keyword>
<name>CAHM2_BOVIN</name>
<dbReference type="EMBL" id="BC113290">
    <property type="protein sequence ID" value="AAI13291.1"/>
    <property type="molecule type" value="mRNA"/>
</dbReference>
<dbReference type="RefSeq" id="NP_001039885.1">
    <property type="nucleotide sequence ID" value="NM_001046420.1"/>
</dbReference>
<dbReference type="SMR" id="Q2HJ63"/>
<dbReference type="FunCoup" id="Q2HJ63">
    <property type="interactions" value="422"/>
</dbReference>
<dbReference type="STRING" id="9913.ENSBTAP00000012820"/>
<dbReference type="PaxDb" id="9913-ENSBTAP00000012820"/>
<dbReference type="Ensembl" id="ENSBTAT00000012820.6">
    <property type="protein sequence ID" value="ENSBTAP00000012820.5"/>
    <property type="gene ID" value="ENSBTAG00000009719.6"/>
</dbReference>
<dbReference type="GeneID" id="537067"/>
<dbReference type="KEGG" id="bta:537067"/>
<dbReference type="CTD" id="51063"/>
<dbReference type="VEuPathDB" id="HostDB:ENSBTAG00000009719"/>
<dbReference type="VGNC" id="VGNC:26708">
    <property type="gene designation" value="CALHM2"/>
</dbReference>
<dbReference type="eggNOG" id="ENOG502QVU7">
    <property type="taxonomic scope" value="Eukaryota"/>
</dbReference>
<dbReference type="GeneTree" id="ENSGT01030000234610"/>
<dbReference type="HOGENOM" id="CLU_069286_1_0_1"/>
<dbReference type="InParanoid" id="Q2HJ63"/>
<dbReference type="OMA" id="LNTHTWN"/>
<dbReference type="OrthoDB" id="9865653at2759"/>
<dbReference type="TreeFam" id="TF329085"/>
<dbReference type="Proteomes" id="UP000009136">
    <property type="component" value="Chromosome 26"/>
</dbReference>
<dbReference type="Bgee" id="ENSBTAG00000009719">
    <property type="expression patterns" value="Expressed in ureter and 104 other cell types or tissues"/>
</dbReference>
<dbReference type="GO" id="GO:0005886">
    <property type="term" value="C:plasma membrane"/>
    <property type="evidence" value="ECO:0000250"/>
    <property type="project" value="UniProtKB"/>
</dbReference>
<dbReference type="GO" id="GO:0005261">
    <property type="term" value="F:monoatomic cation channel activity"/>
    <property type="evidence" value="ECO:0000318"/>
    <property type="project" value="GO_Central"/>
</dbReference>
<dbReference type="GO" id="GO:1904669">
    <property type="term" value="P:ATP export"/>
    <property type="evidence" value="ECO:0000250"/>
    <property type="project" value="UniProtKB"/>
</dbReference>
<dbReference type="GO" id="GO:0070509">
    <property type="term" value="P:calcium ion import"/>
    <property type="evidence" value="ECO:0000250"/>
    <property type="project" value="UniProtKB"/>
</dbReference>
<dbReference type="GO" id="GO:0043065">
    <property type="term" value="P:positive regulation of apoptotic process"/>
    <property type="evidence" value="ECO:0007669"/>
    <property type="project" value="Ensembl"/>
</dbReference>
<dbReference type="GO" id="GO:1903978">
    <property type="term" value="P:regulation of microglial cell activation"/>
    <property type="evidence" value="ECO:0000250"/>
    <property type="project" value="UniProtKB"/>
</dbReference>
<dbReference type="GO" id="GO:0048167">
    <property type="term" value="P:regulation of synaptic plasticity"/>
    <property type="evidence" value="ECO:0000250"/>
    <property type="project" value="UniProtKB"/>
</dbReference>
<dbReference type="InterPro" id="IPR029569">
    <property type="entry name" value="CALHM"/>
</dbReference>
<dbReference type="PANTHER" id="PTHR32261">
    <property type="entry name" value="CALCIUM HOMEOSTASIS MODULATOR PROTEIN"/>
    <property type="match status" value="1"/>
</dbReference>
<dbReference type="PANTHER" id="PTHR32261:SF3">
    <property type="entry name" value="CALCIUM HOMEOSTASIS MODULATOR PROTEIN 2"/>
    <property type="match status" value="1"/>
</dbReference>
<dbReference type="Pfam" id="PF14798">
    <property type="entry name" value="Ca_hom_mod"/>
    <property type="match status" value="1"/>
</dbReference>
<sequence length="323" mass="36113">MAALIAENFRFLSLFFKSKDVMIFNGLVALGTVGSQELFTVVAFHCPCSPARNYLYGLAAIGVPALALFLIGVILNNHTWNLVAECQYRRTKNCSAAPNFLLLSSIVGRAAVAPVTWSVISLLRGEAYVCALSEFVNPHSLMVGERSFPVAHATEILARFPCGEGPANLSVFREEVSRRLKYESQLFGWLLIGVVAILVFLTKCLKHYCSPLSYRQEAYWAQYRANEDQLFQRTAEVHSRVLAANNVRRFFGFVALDKDDEELVAKFPVEGTQPRLQWNAITGVYLYRENQGLPLYSRLHKWAQGVVGNGMTPDHVEMSLLPS</sequence>
<organism>
    <name type="scientific">Bos taurus</name>
    <name type="common">Bovine</name>
    <dbReference type="NCBI Taxonomy" id="9913"/>
    <lineage>
        <taxon>Eukaryota</taxon>
        <taxon>Metazoa</taxon>
        <taxon>Chordata</taxon>
        <taxon>Craniata</taxon>
        <taxon>Vertebrata</taxon>
        <taxon>Euteleostomi</taxon>
        <taxon>Mammalia</taxon>
        <taxon>Eutheria</taxon>
        <taxon>Laurasiatheria</taxon>
        <taxon>Artiodactyla</taxon>
        <taxon>Ruminantia</taxon>
        <taxon>Pecora</taxon>
        <taxon>Bovidae</taxon>
        <taxon>Bovinae</taxon>
        <taxon>Bos</taxon>
    </lineage>
</organism>
<gene>
    <name type="primary">CALHM2</name>
</gene>
<protein>
    <recommendedName>
        <fullName>Calcium homeostasis modulator protein 2</fullName>
    </recommendedName>
    <alternativeName>
        <fullName>Protein FAM26B</fullName>
    </alternativeName>
</protein>
<accession>Q2HJ63</accession>
<feature type="chain" id="PRO_0000247440" description="Calcium homeostasis modulator protein 2">
    <location>
        <begin position="1"/>
        <end position="323"/>
    </location>
</feature>
<feature type="topological domain" description="Cytoplasmic" evidence="4">
    <location>
        <begin position="1"/>
        <end position="21"/>
    </location>
</feature>
<feature type="transmembrane region" description="Helical; Name=S1" evidence="2">
    <location>
        <begin position="22"/>
        <end position="43"/>
    </location>
</feature>
<feature type="topological domain" description="Extracellular" evidence="4">
    <location>
        <begin position="44"/>
        <end position="52"/>
    </location>
</feature>
<feature type="transmembrane region" description="Helical; Name=S2" evidence="2">
    <location>
        <begin position="53"/>
        <end position="76"/>
    </location>
</feature>
<feature type="topological domain" description="Cytoplasmic" evidence="4">
    <location>
        <begin position="77"/>
        <end position="101"/>
    </location>
</feature>
<feature type="transmembrane region" description="Helical; Name=S3" evidence="2">
    <location>
        <begin position="102"/>
        <end position="132"/>
    </location>
</feature>
<feature type="topological domain" description="Extracellular" evidence="4">
    <location>
        <begin position="133"/>
        <end position="179"/>
    </location>
</feature>
<feature type="transmembrane region" description="Helical; Name=S4" evidence="2">
    <location>
        <begin position="180"/>
        <end position="206"/>
    </location>
</feature>
<feature type="topological domain" description="Cytoplasmic" evidence="4">
    <location>
        <begin position="207"/>
        <end position="323"/>
    </location>
</feature>
<feature type="region of interest" description="Central pore" evidence="2">
    <location>
        <begin position="14"/>
        <end position="39"/>
    </location>
</feature>
<feature type="region of interest" description="Hemichannel docking" evidence="2">
    <location>
        <begin position="145"/>
        <end position="152"/>
    </location>
</feature>
<feature type="region of interest" description="Intersubunit interaction" evidence="2">
    <location>
        <begin position="214"/>
        <end position="251"/>
    </location>
</feature>
<feature type="site" description="Not N-glycosylated" evidence="2">
    <location>
        <position position="168"/>
    </location>
</feature>
<feature type="disulfide bond" evidence="2">
    <location>
        <begin position="46"/>
        <end position="130"/>
    </location>
</feature>
<feature type="disulfide bond" evidence="2">
    <location>
        <begin position="48"/>
        <end position="162"/>
    </location>
</feature>
<evidence type="ECO:0000250" key="1">
    <source>
        <dbReference type="UniProtKB" id="Q8VEC4"/>
    </source>
</evidence>
<evidence type="ECO:0000250" key="2">
    <source>
        <dbReference type="UniProtKB" id="Q9HA72"/>
    </source>
</evidence>
<evidence type="ECO:0000255" key="3"/>
<evidence type="ECO:0000305" key="4"/>